<proteinExistence type="inferred from homology"/>
<keyword id="KW-0150">Chloroplast</keyword>
<keyword id="KW-0934">Plastid</keyword>
<keyword id="KW-1185">Reference proteome</keyword>
<keyword id="KW-0687">Ribonucleoprotein</keyword>
<keyword id="KW-0689">Ribosomal protein</keyword>
<keyword id="KW-0809">Transit peptide</keyword>
<dbReference type="EMBL" id="AB011480">
    <property type="protein sequence ID" value="BAB11220.1"/>
    <property type="molecule type" value="Genomic_DNA"/>
</dbReference>
<dbReference type="EMBL" id="CP002688">
    <property type="protein sequence ID" value="AED92480.1"/>
    <property type="molecule type" value="Genomic_DNA"/>
</dbReference>
<dbReference type="EMBL" id="AY039549">
    <property type="protein sequence ID" value="AAK62604.1"/>
    <property type="molecule type" value="mRNA"/>
</dbReference>
<dbReference type="EMBL" id="AY093759">
    <property type="protein sequence ID" value="AAM10383.1"/>
    <property type="molecule type" value="mRNA"/>
</dbReference>
<dbReference type="EMBL" id="AY086669">
    <property type="protein sequence ID" value="AAM63726.1"/>
    <property type="molecule type" value="mRNA"/>
</dbReference>
<dbReference type="RefSeq" id="NP_568358.1">
    <property type="nucleotide sequence ID" value="NM_121793.3"/>
</dbReference>
<dbReference type="SMR" id="Q9FKP0"/>
<dbReference type="FunCoup" id="Q9FKP0">
    <property type="interactions" value="933"/>
</dbReference>
<dbReference type="STRING" id="3702.Q9FKP0"/>
<dbReference type="PaxDb" id="3702-AT5G17870.1"/>
<dbReference type="ProteomicsDB" id="249372"/>
<dbReference type="EnsemblPlants" id="AT5G17870.1">
    <property type="protein sequence ID" value="AT5G17870.1"/>
    <property type="gene ID" value="AT5G17870"/>
</dbReference>
<dbReference type="GeneID" id="831655"/>
<dbReference type="Gramene" id="AT5G17870.1">
    <property type="protein sequence ID" value="AT5G17870.1"/>
    <property type="gene ID" value="AT5G17870"/>
</dbReference>
<dbReference type="KEGG" id="ath:AT5G17870"/>
<dbReference type="Araport" id="AT5G17870"/>
<dbReference type="TAIR" id="AT5G17870">
    <property type="gene designation" value="PSRP6"/>
</dbReference>
<dbReference type="eggNOG" id="ENOG502S6UG">
    <property type="taxonomic scope" value="Eukaryota"/>
</dbReference>
<dbReference type="HOGENOM" id="CLU_164335_0_0_1"/>
<dbReference type="InParanoid" id="Q9FKP0"/>
<dbReference type="OrthoDB" id="1848184at2759"/>
<dbReference type="PhylomeDB" id="Q9FKP0"/>
<dbReference type="PRO" id="PR:Q9FKP0"/>
<dbReference type="Proteomes" id="UP000006548">
    <property type="component" value="Chromosome 5"/>
</dbReference>
<dbReference type="ExpressionAtlas" id="Q9FKP0">
    <property type="expression patterns" value="baseline and differential"/>
</dbReference>
<dbReference type="GO" id="GO:0009507">
    <property type="term" value="C:chloroplast"/>
    <property type="evidence" value="ECO:0000314"/>
    <property type="project" value="TAIR"/>
</dbReference>
<dbReference type="GO" id="GO:0009536">
    <property type="term" value="C:plastid"/>
    <property type="evidence" value="ECO:0007005"/>
    <property type="project" value="TAIR"/>
</dbReference>
<dbReference type="GO" id="GO:1990904">
    <property type="term" value="C:ribonucleoprotein complex"/>
    <property type="evidence" value="ECO:0007669"/>
    <property type="project" value="UniProtKB-KW"/>
</dbReference>
<dbReference type="GO" id="GO:0005840">
    <property type="term" value="C:ribosome"/>
    <property type="evidence" value="ECO:0007669"/>
    <property type="project" value="UniProtKB-KW"/>
</dbReference>
<dbReference type="GO" id="GO:0003729">
    <property type="term" value="F:mRNA binding"/>
    <property type="evidence" value="ECO:0000314"/>
    <property type="project" value="TAIR"/>
</dbReference>
<dbReference type="GO" id="GO:0019843">
    <property type="term" value="F:rRNA binding"/>
    <property type="evidence" value="ECO:0007669"/>
    <property type="project" value="InterPro"/>
</dbReference>
<dbReference type="GO" id="GO:0003735">
    <property type="term" value="F:structural constituent of ribosome"/>
    <property type="evidence" value="ECO:0007669"/>
    <property type="project" value="InterPro"/>
</dbReference>
<dbReference type="GO" id="GO:0006412">
    <property type="term" value="P:translation"/>
    <property type="evidence" value="ECO:0007669"/>
    <property type="project" value="InterPro"/>
</dbReference>
<dbReference type="InterPro" id="IPR020526">
    <property type="entry name" value="Ribosomal_cL38"/>
</dbReference>
<dbReference type="PANTHER" id="PTHR36798">
    <property type="entry name" value="50S RIBOSOMAL PROTEIN 6, CHLOROPLASTIC"/>
    <property type="match status" value="1"/>
</dbReference>
<dbReference type="PANTHER" id="PTHR36798:SF2">
    <property type="entry name" value="LARGE RIBOSOMAL SUBUNIT PROTEIN CL38"/>
    <property type="match status" value="1"/>
</dbReference>
<dbReference type="Pfam" id="PF17257">
    <property type="entry name" value="DUF5323"/>
    <property type="match status" value="1"/>
</dbReference>
<protein>
    <recommendedName>
        <fullName evidence="3">Large ribosomal subunit protein cL38</fullName>
    </recommendedName>
    <alternativeName>
        <fullName>50S ribosomal protein 6, chloroplastic</fullName>
    </alternativeName>
    <alternativeName>
        <fullName>CL25</fullName>
    </alternativeName>
    <alternativeName>
        <fullName>Plastid-specific 50S ribosomal protein 6</fullName>
        <shortName>PSRP-6</shortName>
    </alternativeName>
</protein>
<name>PSRP6_ARATH</name>
<gene>
    <name type="primary">PSRP6</name>
    <name type="ordered locus">At5g17870</name>
    <name type="ORF">MPI7_10</name>
</gene>
<reference key="1">
    <citation type="journal article" date="1998" name="DNA Res.">
        <title>Structural analysis of Arabidopsis thaliana chromosome 5. V. Sequence features of the regions of 1,381,565 bp covered by twenty one physically assigned P1 and TAC clones.</title>
        <authorList>
            <person name="Kaneko T."/>
            <person name="Kotani H."/>
            <person name="Nakamura Y."/>
            <person name="Sato S."/>
            <person name="Asamizu E."/>
            <person name="Miyajima N."/>
            <person name="Tabata S."/>
        </authorList>
    </citation>
    <scope>NUCLEOTIDE SEQUENCE [LARGE SCALE GENOMIC DNA]</scope>
    <source>
        <strain>cv. Columbia</strain>
    </source>
</reference>
<reference key="2">
    <citation type="journal article" date="2017" name="Plant J.">
        <title>Araport11: a complete reannotation of the Arabidopsis thaliana reference genome.</title>
        <authorList>
            <person name="Cheng C.Y."/>
            <person name="Krishnakumar V."/>
            <person name="Chan A.P."/>
            <person name="Thibaud-Nissen F."/>
            <person name="Schobel S."/>
            <person name="Town C.D."/>
        </authorList>
    </citation>
    <scope>GENOME REANNOTATION</scope>
    <source>
        <strain>cv. Columbia</strain>
    </source>
</reference>
<reference key="3">
    <citation type="journal article" date="2003" name="Science">
        <title>Empirical analysis of transcriptional activity in the Arabidopsis genome.</title>
        <authorList>
            <person name="Yamada K."/>
            <person name="Lim J."/>
            <person name="Dale J.M."/>
            <person name="Chen H."/>
            <person name="Shinn P."/>
            <person name="Palm C.J."/>
            <person name="Southwick A.M."/>
            <person name="Wu H.C."/>
            <person name="Kim C.J."/>
            <person name="Nguyen M."/>
            <person name="Pham P.K."/>
            <person name="Cheuk R.F."/>
            <person name="Karlin-Newmann G."/>
            <person name="Liu S.X."/>
            <person name="Lam B."/>
            <person name="Sakano H."/>
            <person name="Wu T."/>
            <person name="Yu G."/>
            <person name="Miranda M."/>
            <person name="Quach H.L."/>
            <person name="Tripp M."/>
            <person name="Chang C.H."/>
            <person name="Lee J.M."/>
            <person name="Toriumi M.J."/>
            <person name="Chan M.M."/>
            <person name="Tang C.C."/>
            <person name="Onodera C.S."/>
            <person name="Deng J.M."/>
            <person name="Akiyama K."/>
            <person name="Ansari Y."/>
            <person name="Arakawa T."/>
            <person name="Banh J."/>
            <person name="Banno F."/>
            <person name="Bowser L."/>
            <person name="Brooks S.Y."/>
            <person name="Carninci P."/>
            <person name="Chao Q."/>
            <person name="Choy N."/>
            <person name="Enju A."/>
            <person name="Goldsmith A.D."/>
            <person name="Gurjal M."/>
            <person name="Hansen N.F."/>
            <person name="Hayashizaki Y."/>
            <person name="Johnson-Hopson C."/>
            <person name="Hsuan V.W."/>
            <person name="Iida K."/>
            <person name="Karnes M."/>
            <person name="Khan S."/>
            <person name="Koesema E."/>
            <person name="Ishida J."/>
            <person name="Jiang P.X."/>
            <person name="Jones T."/>
            <person name="Kawai J."/>
            <person name="Kamiya A."/>
            <person name="Meyers C."/>
            <person name="Nakajima M."/>
            <person name="Narusaka M."/>
            <person name="Seki M."/>
            <person name="Sakurai T."/>
            <person name="Satou M."/>
            <person name="Tamse R."/>
            <person name="Vaysberg M."/>
            <person name="Wallender E.K."/>
            <person name="Wong C."/>
            <person name="Yamamura Y."/>
            <person name="Yuan S."/>
            <person name="Shinozaki K."/>
            <person name="Davis R.W."/>
            <person name="Theologis A."/>
            <person name="Ecker J.R."/>
        </authorList>
    </citation>
    <scope>NUCLEOTIDE SEQUENCE [LARGE SCALE MRNA]</scope>
    <source>
        <strain>cv. Columbia</strain>
    </source>
</reference>
<reference key="4">
    <citation type="submission" date="2002-03" db="EMBL/GenBank/DDBJ databases">
        <title>Full-length cDNA from Arabidopsis thaliana.</title>
        <authorList>
            <person name="Brover V.V."/>
            <person name="Troukhan M.E."/>
            <person name="Alexandrov N.A."/>
            <person name="Lu Y.-P."/>
            <person name="Flavell R.B."/>
            <person name="Feldmann K.A."/>
        </authorList>
    </citation>
    <scope>NUCLEOTIDE SEQUENCE [LARGE SCALE MRNA]</scope>
</reference>
<reference key="5">
    <citation type="journal article" date="2023" name="Plant Cell">
        <title>An updated nomenclature for plant ribosomal protein genes.</title>
        <authorList>
            <person name="Scarpin M.R."/>
            <person name="Busche M."/>
            <person name="Martinez R.E."/>
            <person name="Harper L.C."/>
            <person name="Reiser L."/>
            <person name="Szakonyi D."/>
            <person name="Merchante C."/>
            <person name="Lan T."/>
            <person name="Xiong W."/>
            <person name="Mo B."/>
            <person name="Tang G."/>
            <person name="Chen X."/>
            <person name="Bailey-Serres J."/>
            <person name="Browning K.S."/>
            <person name="Brunkard J.O."/>
        </authorList>
    </citation>
    <scope>NOMENCLATURE</scope>
</reference>
<accession>Q9FKP0</accession>
<comment type="subunit">
    <text evidence="1">Part of the 50S ribosomal subunit.</text>
</comment>
<comment type="subcellular location">
    <subcellularLocation>
        <location>Plastid</location>
        <location>Chloroplast</location>
    </subcellularLocation>
</comment>
<comment type="similarity">
    <text evidence="4">Belongs to the chloroplast-specific ribosomal protein cL38 family.</text>
</comment>
<feature type="transit peptide" description="Chloroplast" evidence="1">
    <location>
        <begin position="1"/>
        <end position="39"/>
    </location>
</feature>
<feature type="chain" id="PRO_0000249864" description="Large ribosomal subunit protein cL38">
    <location>
        <begin position="40"/>
        <end position="106"/>
    </location>
</feature>
<feature type="region of interest" description="Disordered" evidence="2">
    <location>
        <begin position="42"/>
        <end position="70"/>
    </location>
</feature>
<feature type="compositionally biased region" description="Basic residues" evidence="2">
    <location>
        <begin position="44"/>
        <end position="59"/>
    </location>
</feature>
<evidence type="ECO:0000250" key="1"/>
<evidence type="ECO:0000256" key="2">
    <source>
        <dbReference type="SAM" id="MobiDB-lite"/>
    </source>
</evidence>
<evidence type="ECO:0000303" key="3">
    <source>
    </source>
</evidence>
<evidence type="ECO:0000305" key="4"/>
<sequence>MSVSAIFGTGIVTVAASPVLRQFQVPKLGNGGGLGMVIECSSRPQKKSTAHHRKTRPKKTQPWDIKRKPTVYAPLPPLPAEWSPFTLASDDGGAATAAGDLVSGAA</sequence>
<organism>
    <name type="scientific">Arabidopsis thaliana</name>
    <name type="common">Mouse-ear cress</name>
    <dbReference type="NCBI Taxonomy" id="3702"/>
    <lineage>
        <taxon>Eukaryota</taxon>
        <taxon>Viridiplantae</taxon>
        <taxon>Streptophyta</taxon>
        <taxon>Embryophyta</taxon>
        <taxon>Tracheophyta</taxon>
        <taxon>Spermatophyta</taxon>
        <taxon>Magnoliopsida</taxon>
        <taxon>eudicotyledons</taxon>
        <taxon>Gunneridae</taxon>
        <taxon>Pentapetalae</taxon>
        <taxon>rosids</taxon>
        <taxon>malvids</taxon>
        <taxon>Brassicales</taxon>
        <taxon>Brassicaceae</taxon>
        <taxon>Camelineae</taxon>
        <taxon>Arabidopsis</taxon>
    </lineage>
</organism>